<reference key="1">
    <citation type="journal article" date="2009" name="Nature">
        <title>Evolution of pathogenicity and sexual reproduction in eight Candida genomes.</title>
        <authorList>
            <person name="Butler G."/>
            <person name="Rasmussen M.D."/>
            <person name="Lin M.F."/>
            <person name="Santos M.A.S."/>
            <person name="Sakthikumar S."/>
            <person name="Munro C.A."/>
            <person name="Rheinbay E."/>
            <person name="Grabherr M."/>
            <person name="Forche A."/>
            <person name="Reedy J.L."/>
            <person name="Agrafioti I."/>
            <person name="Arnaud M.B."/>
            <person name="Bates S."/>
            <person name="Brown A.J.P."/>
            <person name="Brunke S."/>
            <person name="Costanzo M.C."/>
            <person name="Fitzpatrick D.A."/>
            <person name="de Groot P.W.J."/>
            <person name="Harris D."/>
            <person name="Hoyer L.L."/>
            <person name="Hube B."/>
            <person name="Klis F.M."/>
            <person name="Kodira C."/>
            <person name="Lennard N."/>
            <person name="Logue M.E."/>
            <person name="Martin R."/>
            <person name="Neiman A.M."/>
            <person name="Nikolaou E."/>
            <person name="Quail M.A."/>
            <person name="Quinn J."/>
            <person name="Santos M.C."/>
            <person name="Schmitzberger F.F."/>
            <person name="Sherlock G."/>
            <person name="Shah P."/>
            <person name="Silverstein K.A.T."/>
            <person name="Skrzypek M.S."/>
            <person name="Soll D."/>
            <person name="Staggs R."/>
            <person name="Stansfield I."/>
            <person name="Stumpf M.P.H."/>
            <person name="Sudbery P.E."/>
            <person name="Srikantha T."/>
            <person name="Zeng Q."/>
            <person name="Berman J."/>
            <person name="Berriman M."/>
            <person name="Heitman J."/>
            <person name="Gow N.A.R."/>
            <person name="Lorenz M.C."/>
            <person name="Birren B.W."/>
            <person name="Kellis M."/>
            <person name="Cuomo C.A."/>
        </authorList>
    </citation>
    <scope>NUCLEOTIDE SEQUENCE [LARGE SCALE GENOMIC DNA]</scope>
    <source>
        <strain>WO-1</strain>
    </source>
</reference>
<gene>
    <name evidence="1" type="primary">RPS0</name>
    <name type="ORF">CAWG_02850</name>
</gene>
<sequence length="261" mass="28730">MSLPASFDLTPEDAKLLLAANVHLGAKNVQVHNKPYVYKTRPDGMNIINIGKTWEKIVLAARIIAAVPNASDVAVCSSRTFGQRAVLKFAAHTGATAIAGRFTPGNFTNYITRSFKEPRLVVVTDPRTDAQAIKESSYVNIPVIALTDMDSPSEYVDVAIPCNNKGKHSIGLIWWLLAREVLRLRGIIPDRTTEWSVMPDLYFYRDPEEIEQNAVEEAKTEEVEEAPVAEAETEWTGETEDVDWADSGATPAAEDAAASNW</sequence>
<proteinExistence type="inferred from homology"/>
<keyword id="KW-0007">Acetylation</keyword>
<keyword id="KW-0963">Cytoplasm</keyword>
<keyword id="KW-0687">Ribonucleoprotein</keyword>
<keyword id="KW-0689">Ribosomal protein</keyword>
<evidence type="ECO:0000255" key="1">
    <source>
        <dbReference type="HAMAP-Rule" id="MF_03015"/>
    </source>
</evidence>
<evidence type="ECO:0000256" key="2">
    <source>
        <dbReference type="SAM" id="MobiDB-lite"/>
    </source>
</evidence>
<evidence type="ECO:0000305" key="3"/>
<comment type="function">
    <text evidence="1">Required for the assembly and/or stability of the 40S ribosomal subunit. Required for the processing of the 20S rRNA-precursor to mature 18S rRNA in a late step of the maturation of 40S ribosomal subunits.</text>
</comment>
<comment type="subunit">
    <text evidence="1">Component of the small ribosomal subunit. Mature ribosomes consist of a small (40S) and a large (60S) subunit. The 40S subunit contains about 33 different proteins and 1 molecule of RNA (18S). The 60S subunit contains about 49 different proteins and 3 molecules of RNA (25S, 5.8S and 5S). Interacts with RPS21.</text>
</comment>
<comment type="subcellular location">
    <subcellularLocation>
        <location evidence="1">Cytoplasm</location>
    </subcellularLocation>
</comment>
<comment type="similarity">
    <text evidence="1">Belongs to the universal ribosomal protein uS2 family.</text>
</comment>
<name>RSSA_CANAW</name>
<accession>C4YNR7</accession>
<feature type="initiator methionine" description="Removed" evidence="1">
    <location>
        <position position="1"/>
    </location>
</feature>
<feature type="chain" id="PRO_0000389272" description="Small ribosomal subunit protein uS2">
    <location>
        <begin position="2"/>
        <end position="261"/>
    </location>
</feature>
<feature type="region of interest" description="Disordered" evidence="2">
    <location>
        <begin position="217"/>
        <end position="261"/>
    </location>
</feature>
<feature type="compositionally biased region" description="Acidic residues" evidence="2">
    <location>
        <begin position="222"/>
        <end position="244"/>
    </location>
</feature>
<feature type="modified residue" description="N-acetylserine" evidence="1">
    <location>
        <position position="2"/>
    </location>
</feature>
<organism>
    <name type="scientific">Candida albicans (strain WO-1)</name>
    <name type="common">Yeast</name>
    <dbReference type="NCBI Taxonomy" id="294748"/>
    <lineage>
        <taxon>Eukaryota</taxon>
        <taxon>Fungi</taxon>
        <taxon>Dikarya</taxon>
        <taxon>Ascomycota</taxon>
        <taxon>Saccharomycotina</taxon>
        <taxon>Pichiomycetes</taxon>
        <taxon>Debaryomycetaceae</taxon>
        <taxon>Candida/Lodderomyces clade</taxon>
        <taxon>Candida</taxon>
    </lineage>
</organism>
<protein>
    <recommendedName>
        <fullName evidence="1">Small ribosomal subunit protein uS2</fullName>
    </recommendedName>
    <alternativeName>
        <fullName evidence="3">40S ribosomal protein S0</fullName>
    </alternativeName>
</protein>
<dbReference type="EMBL" id="CM000310">
    <property type="protein sequence ID" value="EEQ44576.1"/>
    <property type="molecule type" value="Genomic_DNA"/>
</dbReference>
<dbReference type="SMR" id="C4YNR7"/>
<dbReference type="PaxDb" id="5476-C4YNR7"/>
<dbReference type="VEuPathDB" id="FungiDB:CAWG_02850"/>
<dbReference type="HOGENOM" id="CLU_058171_2_0_1"/>
<dbReference type="OMA" id="VKNFFEP"/>
<dbReference type="OrthoDB" id="12634at766764"/>
<dbReference type="Proteomes" id="UP000001429">
    <property type="component" value="Chromosome 3"/>
</dbReference>
<dbReference type="GO" id="GO:0022627">
    <property type="term" value="C:cytosolic small ribosomal subunit"/>
    <property type="evidence" value="ECO:0007669"/>
    <property type="project" value="UniProtKB-UniRule"/>
</dbReference>
<dbReference type="GO" id="GO:0003735">
    <property type="term" value="F:structural constituent of ribosome"/>
    <property type="evidence" value="ECO:0007669"/>
    <property type="project" value="UniProtKB-UniRule"/>
</dbReference>
<dbReference type="GO" id="GO:0000028">
    <property type="term" value="P:ribosomal small subunit assembly"/>
    <property type="evidence" value="ECO:0007669"/>
    <property type="project" value="UniProtKB-UniRule"/>
</dbReference>
<dbReference type="GO" id="GO:0006412">
    <property type="term" value="P:translation"/>
    <property type="evidence" value="ECO:0007669"/>
    <property type="project" value="UniProtKB-UniRule"/>
</dbReference>
<dbReference type="CDD" id="cd01425">
    <property type="entry name" value="RPS2"/>
    <property type="match status" value="1"/>
</dbReference>
<dbReference type="FunFam" id="3.40.50.10490:FF:000010">
    <property type="entry name" value="40S ribosomal protein S0"/>
    <property type="match status" value="1"/>
</dbReference>
<dbReference type="Gene3D" id="3.40.50.10490">
    <property type="entry name" value="Glucose-6-phosphate isomerase like protein, domain 1"/>
    <property type="match status" value="1"/>
</dbReference>
<dbReference type="HAMAP" id="MF_03015">
    <property type="entry name" value="Ribosomal_S2_euk"/>
    <property type="match status" value="1"/>
</dbReference>
<dbReference type="InterPro" id="IPR001865">
    <property type="entry name" value="Ribosomal_uS2"/>
</dbReference>
<dbReference type="InterPro" id="IPR018130">
    <property type="entry name" value="Ribosomal_uS2_CS"/>
</dbReference>
<dbReference type="InterPro" id="IPR027498">
    <property type="entry name" value="Ribosomal_uS2_euk"/>
</dbReference>
<dbReference type="InterPro" id="IPR005707">
    <property type="entry name" value="Ribosomal_uS2_euk/arc"/>
</dbReference>
<dbReference type="InterPro" id="IPR023591">
    <property type="entry name" value="Ribosomal_uS2_flav_dom_sf"/>
</dbReference>
<dbReference type="NCBIfam" id="TIGR01012">
    <property type="entry name" value="uS2_euk_arch"/>
    <property type="match status" value="1"/>
</dbReference>
<dbReference type="PANTHER" id="PTHR11489">
    <property type="entry name" value="40S RIBOSOMAL PROTEIN SA"/>
    <property type="match status" value="1"/>
</dbReference>
<dbReference type="Pfam" id="PF00318">
    <property type="entry name" value="Ribosomal_S2"/>
    <property type="match status" value="2"/>
</dbReference>
<dbReference type="PRINTS" id="PR00395">
    <property type="entry name" value="RIBOSOMALS2"/>
</dbReference>
<dbReference type="SUPFAM" id="SSF52313">
    <property type="entry name" value="Ribosomal protein S2"/>
    <property type="match status" value="1"/>
</dbReference>
<dbReference type="PROSITE" id="PS00962">
    <property type="entry name" value="RIBOSOMAL_S2_1"/>
    <property type="match status" value="1"/>
</dbReference>
<dbReference type="PROSITE" id="PS00963">
    <property type="entry name" value="RIBOSOMAL_S2_2"/>
    <property type="match status" value="1"/>
</dbReference>